<gene>
    <name type="ORF">SPBC119.18</name>
</gene>
<accession>Q96VG1</accession>
<dbReference type="EMBL" id="CU329671">
    <property type="protein sequence ID" value="CAC51385.1"/>
    <property type="molecule type" value="Genomic_DNA"/>
</dbReference>
<dbReference type="SMR" id="Q96VG1"/>
<dbReference type="BioGRID" id="276636">
    <property type="interactions" value="3"/>
</dbReference>
<dbReference type="FunCoup" id="Q96VG1">
    <property type="interactions" value="174"/>
</dbReference>
<dbReference type="STRING" id="284812.Q96VG1"/>
<dbReference type="PaxDb" id="4896-SPBC119.18.1"/>
<dbReference type="EnsemblFungi" id="SPBC119.18.1">
    <property type="protein sequence ID" value="SPBC119.18.1:pep"/>
    <property type="gene ID" value="SPBC119.18"/>
</dbReference>
<dbReference type="KEGG" id="spo:2540098"/>
<dbReference type="PomBase" id="SPBC119.18"/>
<dbReference type="VEuPathDB" id="FungiDB:SPBC119.18"/>
<dbReference type="eggNOG" id="KOG3481">
    <property type="taxonomic scope" value="Eukaryota"/>
</dbReference>
<dbReference type="HOGENOM" id="CLU_101473_2_1_1"/>
<dbReference type="InParanoid" id="Q96VG1"/>
<dbReference type="OMA" id="KKYDDCF"/>
<dbReference type="PhylomeDB" id="Q96VG1"/>
<dbReference type="Reactome" id="R-SPO-6803204">
    <property type="pathway name" value="TP53 Regulates Transcription of Genes Involved in Cytochrome C Release"/>
</dbReference>
<dbReference type="PRO" id="PR:Q96VG1"/>
<dbReference type="Proteomes" id="UP000002485">
    <property type="component" value="Chromosome II"/>
</dbReference>
<dbReference type="GO" id="GO:0005829">
    <property type="term" value="C:cytosol"/>
    <property type="evidence" value="ECO:0007005"/>
    <property type="project" value="PomBase"/>
</dbReference>
<dbReference type="GO" id="GO:0005758">
    <property type="term" value="C:mitochondrial intermembrane space"/>
    <property type="evidence" value="ECO:0000318"/>
    <property type="project" value="GO_Central"/>
</dbReference>
<dbReference type="GO" id="GO:0005634">
    <property type="term" value="C:nucleus"/>
    <property type="evidence" value="ECO:0007005"/>
    <property type="project" value="PomBase"/>
</dbReference>
<dbReference type="GO" id="GO:0120009">
    <property type="term" value="P:intermembrane lipid transfer"/>
    <property type="evidence" value="ECO:0007669"/>
    <property type="project" value="GOC"/>
</dbReference>
<dbReference type="GO" id="GO:0007006">
    <property type="term" value="P:mitochondrial membrane organization"/>
    <property type="evidence" value="ECO:0000266"/>
    <property type="project" value="PomBase"/>
</dbReference>
<dbReference type="GO" id="GO:0045332">
    <property type="term" value="P:phospholipid translocation"/>
    <property type="evidence" value="ECO:0000318"/>
    <property type="project" value="GO_Central"/>
</dbReference>
<dbReference type="InterPro" id="IPR007918">
    <property type="entry name" value="MDM35_apoptosis"/>
</dbReference>
<dbReference type="PANTHER" id="PTHR46403">
    <property type="entry name" value="TP53-REGULATED INHIBITOR OF APOPTOSIS 1"/>
    <property type="match status" value="1"/>
</dbReference>
<dbReference type="PANTHER" id="PTHR46403:SF1">
    <property type="entry name" value="TP53-REGULATED INHIBITOR OF APOPTOSIS 1"/>
    <property type="match status" value="1"/>
</dbReference>
<dbReference type="Pfam" id="PF05254">
    <property type="entry name" value="UPF0203"/>
    <property type="match status" value="1"/>
</dbReference>
<dbReference type="PROSITE" id="PS51808">
    <property type="entry name" value="CHCH"/>
    <property type="match status" value="1"/>
</dbReference>
<feature type="chain" id="PRO_0000220525" description="Uncharacterized protein C119.18">
    <location>
        <begin position="1"/>
        <end position="69"/>
    </location>
</feature>
<feature type="domain" description="CHCH" evidence="1">
    <location>
        <begin position="6"/>
        <end position="56"/>
    </location>
</feature>
<feature type="short sequence motif" description="Cx9C motif 1" evidence="1">
    <location>
        <begin position="9"/>
        <end position="19"/>
    </location>
</feature>
<feature type="short sequence motif" description="Cx9C motif 2" evidence="1">
    <location>
        <begin position="38"/>
        <end position="48"/>
    </location>
</feature>
<feature type="disulfide bond" evidence="1">
    <location>
        <begin position="9"/>
        <end position="48"/>
    </location>
</feature>
<feature type="disulfide bond" evidence="1">
    <location>
        <begin position="19"/>
        <end position="38"/>
    </location>
</feature>
<proteinExistence type="inferred from homology"/>
<name>YBAI_SCHPO</name>
<keyword id="KW-1015">Disulfide bond</keyword>
<keyword id="KW-1185">Reference proteome</keyword>
<reference key="1">
    <citation type="journal article" date="2002" name="Nature">
        <title>The genome sequence of Schizosaccharomyces pombe.</title>
        <authorList>
            <person name="Wood V."/>
            <person name="Gwilliam R."/>
            <person name="Rajandream M.A."/>
            <person name="Lyne M.H."/>
            <person name="Lyne R."/>
            <person name="Stewart A."/>
            <person name="Sgouros J.G."/>
            <person name="Peat N."/>
            <person name="Hayles J."/>
            <person name="Baker S.G."/>
            <person name="Basham D."/>
            <person name="Bowman S."/>
            <person name="Brooks K."/>
            <person name="Brown D."/>
            <person name="Brown S."/>
            <person name="Chillingworth T."/>
            <person name="Churcher C.M."/>
            <person name="Collins M."/>
            <person name="Connor R."/>
            <person name="Cronin A."/>
            <person name="Davis P."/>
            <person name="Feltwell T."/>
            <person name="Fraser A."/>
            <person name="Gentles S."/>
            <person name="Goble A."/>
            <person name="Hamlin N."/>
            <person name="Harris D.E."/>
            <person name="Hidalgo J."/>
            <person name="Hodgson G."/>
            <person name="Holroyd S."/>
            <person name="Hornsby T."/>
            <person name="Howarth S."/>
            <person name="Huckle E.J."/>
            <person name="Hunt S."/>
            <person name="Jagels K."/>
            <person name="James K.D."/>
            <person name="Jones L."/>
            <person name="Jones M."/>
            <person name="Leather S."/>
            <person name="McDonald S."/>
            <person name="McLean J."/>
            <person name="Mooney P."/>
            <person name="Moule S."/>
            <person name="Mungall K.L."/>
            <person name="Murphy L.D."/>
            <person name="Niblett D."/>
            <person name="Odell C."/>
            <person name="Oliver K."/>
            <person name="O'Neil S."/>
            <person name="Pearson D."/>
            <person name="Quail M.A."/>
            <person name="Rabbinowitsch E."/>
            <person name="Rutherford K.M."/>
            <person name="Rutter S."/>
            <person name="Saunders D."/>
            <person name="Seeger K."/>
            <person name="Sharp S."/>
            <person name="Skelton J."/>
            <person name="Simmonds M.N."/>
            <person name="Squares R."/>
            <person name="Squares S."/>
            <person name="Stevens K."/>
            <person name="Taylor K."/>
            <person name="Taylor R.G."/>
            <person name="Tivey A."/>
            <person name="Walsh S.V."/>
            <person name="Warren T."/>
            <person name="Whitehead S."/>
            <person name="Woodward J.R."/>
            <person name="Volckaert G."/>
            <person name="Aert R."/>
            <person name="Robben J."/>
            <person name="Grymonprez B."/>
            <person name="Weltjens I."/>
            <person name="Vanstreels E."/>
            <person name="Rieger M."/>
            <person name="Schaefer M."/>
            <person name="Mueller-Auer S."/>
            <person name="Gabel C."/>
            <person name="Fuchs M."/>
            <person name="Duesterhoeft A."/>
            <person name="Fritzc C."/>
            <person name="Holzer E."/>
            <person name="Moestl D."/>
            <person name="Hilbert H."/>
            <person name="Borzym K."/>
            <person name="Langer I."/>
            <person name="Beck A."/>
            <person name="Lehrach H."/>
            <person name="Reinhardt R."/>
            <person name="Pohl T.M."/>
            <person name="Eger P."/>
            <person name="Zimmermann W."/>
            <person name="Wedler H."/>
            <person name="Wambutt R."/>
            <person name="Purnelle B."/>
            <person name="Goffeau A."/>
            <person name="Cadieu E."/>
            <person name="Dreano S."/>
            <person name="Gloux S."/>
            <person name="Lelaure V."/>
            <person name="Mottier S."/>
            <person name="Galibert F."/>
            <person name="Aves S.J."/>
            <person name="Xiang Z."/>
            <person name="Hunt C."/>
            <person name="Moore K."/>
            <person name="Hurst S.M."/>
            <person name="Lucas M."/>
            <person name="Rochet M."/>
            <person name="Gaillardin C."/>
            <person name="Tallada V.A."/>
            <person name="Garzon A."/>
            <person name="Thode G."/>
            <person name="Daga R.R."/>
            <person name="Cruzado L."/>
            <person name="Jimenez J."/>
            <person name="Sanchez M."/>
            <person name="del Rey F."/>
            <person name="Benito J."/>
            <person name="Dominguez A."/>
            <person name="Revuelta J.L."/>
            <person name="Moreno S."/>
            <person name="Armstrong J."/>
            <person name="Forsburg S.L."/>
            <person name="Cerutti L."/>
            <person name="Lowe T."/>
            <person name="McCombie W.R."/>
            <person name="Paulsen I."/>
            <person name="Potashkin J."/>
            <person name="Shpakovski G.V."/>
            <person name="Ussery D."/>
            <person name="Barrell B.G."/>
            <person name="Nurse P."/>
        </authorList>
    </citation>
    <scope>NUCLEOTIDE SEQUENCE [LARGE SCALE GENOMIC DNA]</scope>
    <source>
        <strain>972 / ATCC 24843</strain>
    </source>
</reference>
<protein>
    <recommendedName>
        <fullName>Uncharacterized protein C119.18</fullName>
    </recommendedName>
</protein>
<sequence length="69" mass="7965">MSSSVSEECTPAKKKYDACFNDWYANKFLKGDLHNRDCDELFAEYKSCLLKALKTKKIDPLLEAARKED</sequence>
<comment type="similarity">
    <text evidence="2">Belongs to the TRIAP1/MDM35 family.</text>
</comment>
<organism>
    <name type="scientific">Schizosaccharomyces pombe (strain 972 / ATCC 24843)</name>
    <name type="common">Fission yeast</name>
    <dbReference type="NCBI Taxonomy" id="284812"/>
    <lineage>
        <taxon>Eukaryota</taxon>
        <taxon>Fungi</taxon>
        <taxon>Dikarya</taxon>
        <taxon>Ascomycota</taxon>
        <taxon>Taphrinomycotina</taxon>
        <taxon>Schizosaccharomycetes</taxon>
        <taxon>Schizosaccharomycetales</taxon>
        <taxon>Schizosaccharomycetaceae</taxon>
        <taxon>Schizosaccharomyces</taxon>
    </lineage>
</organism>
<evidence type="ECO:0000255" key="1">
    <source>
        <dbReference type="PROSITE-ProRule" id="PRU01150"/>
    </source>
</evidence>
<evidence type="ECO:0000305" key="2"/>